<sequence length="223" mass="23877">MHQSSLSLDFFGSPHERVQKALASLRAGGGVLVVDDEDRENEGDLIFPAQTITVPQMAMLIRHCSGIVCLCLTDEYTRRLDLPMMTERNTNTQQTAFTISIEAATGVTTGVSAADRVATIQAAVAENASPENLRRPGHVFPLRAKPGGVLERRGHTEATVDLMRLAGHAPCGVLCELTLDDGSMARLPQVAAFAVAHAIPLCSVEDLVAWRHGLGEENIAISA</sequence>
<feature type="chain" id="PRO_1000193754" description="3,4-dihydroxy-2-butanone 4-phosphate synthase">
    <location>
        <begin position="1"/>
        <end position="223"/>
    </location>
</feature>
<feature type="binding site" evidence="1">
    <location>
        <begin position="39"/>
        <end position="40"/>
    </location>
    <ligand>
        <name>D-ribulose 5-phosphate</name>
        <dbReference type="ChEBI" id="CHEBI:58121"/>
    </ligand>
</feature>
<feature type="binding site" evidence="1">
    <location>
        <position position="40"/>
    </location>
    <ligand>
        <name>Mg(2+)</name>
        <dbReference type="ChEBI" id="CHEBI:18420"/>
        <label>1</label>
    </ligand>
</feature>
<feature type="binding site" evidence="1">
    <location>
        <position position="40"/>
    </location>
    <ligand>
        <name>Mg(2+)</name>
        <dbReference type="ChEBI" id="CHEBI:18420"/>
        <label>2</label>
    </ligand>
</feature>
<feature type="binding site" evidence="1">
    <location>
        <position position="44"/>
    </location>
    <ligand>
        <name>D-ribulose 5-phosphate</name>
        <dbReference type="ChEBI" id="CHEBI:58121"/>
    </ligand>
</feature>
<feature type="binding site" evidence="1">
    <location>
        <begin position="152"/>
        <end position="156"/>
    </location>
    <ligand>
        <name>D-ribulose 5-phosphate</name>
        <dbReference type="ChEBI" id="CHEBI:58121"/>
    </ligand>
</feature>
<feature type="binding site" evidence="1">
    <location>
        <position position="155"/>
    </location>
    <ligand>
        <name>Mg(2+)</name>
        <dbReference type="ChEBI" id="CHEBI:18420"/>
        <label>2</label>
    </ligand>
</feature>
<feature type="binding site" evidence="1">
    <location>
        <position position="176"/>
    </location>
    <ligand>
        <name>D-ribulose 5-phosphate</name>
        <dbReference type="ChEBI" id="CHEBI:58121"/>
    </ligand>
</feature>
<feature type="site" description="Essential for catalytic activity" evidence="1">
    <location>
        <position position="138"/>
    </location>
</feature>
<feature type="site" description="Essential for catalytic activity" evidence="1">
    <location>
        <position position="176"/>
    </location>
</feature>
<proteinExistence type="inferred from homology"/>
<comment type="function">
    <text evidence="1">Catalyzes the conversion of D-ribulose 5-phosphate to formate and 3,4-dihydroxy-2-butanone 4-phosphate.</text>
</comment>
<comment type="catalytic activity">
    <reaction evidence="1">
        <text>D-ribulose 5-phosphate = (2S)-2-hydroxy-3-oxobutyl phosphate + formate + H(+)</text>
        <dbReference type="Rhea" id="RHEA:18457"/>
        <dbReference type="ChEBI" id="CHEBI:15378"/>
        <dbReference type="ChEBI" id="CHEBI:15740"/>
        <dbReference type="ChEBI" id="CHEBI:58121"/>
        <dbReference type="ChEBI" id="CHEBI:58830"/>
        <dbReference type="EC" id="4.1.99.12"/>
    </reaction>
</comment>
<comment type="cofactor">
    <cofactor evidence="1">
        <name>Mg(2+)</name>
        <dbReference type="ChEBI" id="CHEBI:18420"/>
    </cofactor>
    <cofactor evidence="1">
        <name>Mn(2+)</name>
        <dbReference type="ChEBI" id="CHEBI:29035"/>
    </cofactor>
    <text evidence="1">Binds 2 divalent metal cations per subunit. Magnesium or manganese.</text>
</comment>
<comment type="pathway">
    <text evidence="1">Cofactor biosynthesis; riboflavin biosynthesis; 2-hydroxy-3-oxobutyl phosphate from D-ribulose 5-phosphate: step 1/1.</text>
</comment>
<comment type="subunit">
    <text evidence="1">Homodimer.</text>
</comment>
<comment type="similarity">
    <text evidence="1">Belongs to the DHBP synthase family.</text>
</comment>
<organism>
    <name type="scientific">Desulfovibrio desulfuricans (strain ATCC 27774 / DSM 6949 / MB)</name>
    <dbReference type="NCBI Taxonomy" id="525146"/>
    <lineage>
        <taxon>Bacteria</taxon>
        <taxon>Pseudomonadati</taxon>
        <taxon>Thermodesulfobacteriota</taxon>
        <taxon>Desulfovibrionia</taxon>
        <taxon>Desulfovibrionales</taxon>
        <taxon>Desulfovibrionaceae</taxon>
        <taxon>Desulfovibrio</taxon>
    </lineage>
</organism>
<reference key="1">
    <citation type="submission" date="2009-01" db="EMBL/GenBank/DDBJ databases">
        <title>Complete sequence of Desulfovibrio desulfuricans subsp. desulfuricans str. ATCC 27774.</title>
        <authorList>
            <consortium name="US DOE Joint Genome Institute"/>
            <person name="Lucas S."/>
            <person name="Copeland A."/>
            <person name="Lapidus A."/>
            <person name="Glavina del Rio T."/>
            <person name="Tice H."/>
            <person name="Bruce D."/>
            <person name="Goodwin L."/>
            <person name="Pitluck S."/>
            <person name="Sims D."/>
            <person name="Lu M."/>
            <person name="Kiss H."/>
            <person name="Meineke L."/>
            <person name="Brettin T."/>
            <person name="Detter J.C."/>
            <person name="Han C."/>
            <person name="Larimer F."/>
            <person name="Land M."/>
            <person name="Hauser L."/>
            <person name="Kyrpides N."/>
            <person name="Ovchinnikova G."/>
            <person name="Hazen T.C."/>
        </authorList>
    </citation>
    <scope>NUCLEOTIDE SEQUENCE [LARGE SCALE GENOMIC DNA]</scope>
    <source>
        <strain>ATCC 27774 / DSM 6949 / MB</strain>
    </source>
</reference>
<keyword id="KW-0456">Lyase</keyword>
<keyword id="KW-0460">Magnesium</keyword>
<keyword id="KW-0464">Manganese</keyword>
<keyword id="KW-0479">Metal-binding</keyword>
<keyword id="KW-0686">Riboflavin biosynthesis</keyword>
<gene>
    <name evidence="1" type="primary">ribB</name>
    <name type="ordered locus">Ddes_2290</name>
</gene>
<dbReference type="EC" id="4.1.99.12" evidence="1"/>
<dbReference type="EMBL" id="CP001358">
    <property type="protein sequence ID" value="ACL50185.1"/>
    <property type="molecule type" value="Genomic_DNA"/>
</dbReference>
<dbReference type="SMR" id="B8J4Q5"/>
<dbReference type="STRING" id="525146.Ddes_2290"/>
<dbReference type="KEGG" id="dds:Ddes_2290"/>
<dbReference type="eggNOG" id="COG0108">
    <property type="taxonomic scope" value="Bacteria"/>
</dbReference>
<dbReference type="HOGENOM" id="CLU_020273_3_0_7"/>
<dbReference type="UniPathway" id="UPA00275">
    <property type="reaction ID" value="UER00399"/>
</dbReference>
<dbReference type="GO" id="GO:0005829">
    <property type="term" value="C:cytosol"/>
    <property type="evidence" value="ECO:0007669"/>
    <property type="project" value="TreeGrafter"/>
</dbReference>
<dbReference type="GO" id="GO:0008686">
    <property type="term" value="F:3,4-dihydroxy-2-butanone-4-phosphate synthase activity"/>
    <property type="evidence" value="ECO:0007669"/>
    <property type="project" value="UniProtKB-UniRule"/>
</dbReference>
<dbReference type="GO" id="GO:0000287">
    <property type="term" value="F:magnesium ion binding"/>
    <property type="evidence" value="ECO:0007669"/>
    <property type="project" value="UniProtKB-UniRule"/>
</dbReference>
<dbReference type="GO" id="GO:0030145">
    <property type="term" value="F:manganese ion binding"/>
    <property type="evidence" value="ECO:0007669"/>
    <property type="project" value="UniProtKB-UniRule"/>
</dbReference>
<dbReference type="GO" id="GO:0009231">
    <property type="term" value="P:riboflavin biosynthetic process"/>
    <property type="evidence" value="ECO:0007669"/>
    <property type="project" value="UniProtKB-UniRule"/>
</dbReference>
<dbReference type="FunFam" id="3.90.870.10:FF:000002">
    <property type="entry name" value="3,4-dihydroxy-2-butanone 4-phosphate synthase"/>
    <property type="match status" value="1"/>
</dbReference>
<dbReference type="Gene3D" id="3.90.870.10">
    <property type="entry name" value="DHBP synthase"/>
    <property type="match status" value="1"/>
</dbReference>
<dbReference type="HAMAP" id="MF_00180">
    <property type="entry name" value="RibB"/>
    <property type="match status" value="1"/>
</dbReference>
<dbReference type="InterPro" id="IPR017945">
    <property type="entry name" value="DHBP_synth_RibB-like_a/b_dom"/>
</dbReference>
<dbReference type="InterPro" id="IPR000422">
    <property type="entry name" value="DHBP_synthase_RibB"/>
</dbReference>
<dbReference type="NCBIfam" id="TIGR00506">
    <property type="entry name" value="ribB"/>
    <property type="match status" value="1"/>
</dbReference>
<dbReference type="PANTHER" id="PTHR21327:SF38">
    <property type="entry name" value="3,4-DIHYDROXY-2-BUTANONE 4-PHOSPHATE SYNTHASE"/>
    <property type="match status" value="1"/>
</dbReference>
<dbReference type="PANTHER" id="PTHR21327">
    <property type="entry name" value="GTP CYCLOHYDROLASE II-RELATED"/>
    <property type="match status" value="1"/>
</dbReference>
<dbReference type="Pfam" id="PF00926">
    <property type="entry name" value="DHBP_synthase"/>
    <property type="match status" value="1"/>
</dbReference>
<dbReference type="SUPFAM" id="SSF55821">
    <property type="entry name" value="YrdC/RibB"/>
    <property type="match status" value="1"/>
</dbReference>
<protein>
    <recommendedName>
        <fullName evidence="1">3,4-dihydroxy-2-butanone 4-phosphate synthase</fullName>
        <shortName evidence="1">DHBP synthase</shortName>
        <ecNumber evidence="1">4.1.99.12</ecNumber>
    </recommendedName>
</protein>
<name>RIBB_DESDA</name>
<accession>B8J4Q5</accession>
<evidence type="ECO:0000255" key="1">
    <source>
        <dbReference type="HAMAP-Rule" id="MF_00180"/>
    </source>
</evidence>